<organism>
    <name type="scientific">Escherichia coli (strain K12)</name>
    <dbReference type="NCBI Taxonomy" id="83333"/>
    <lineage>
        <taxon>Bacteria</taxon>
        <taxon>Pseudomonadati</taxon>
        <taxon>Pseudomonadota</taxon>
        <taxon>Gammaproteobacteria</taxon>
        <taxon>Enterobacterales</taxon>
        <taxon>Enterobacteriaceae</taxon>
        <taxon>Escherichia</taxon>
    </lineage>
</organism>
<feature type="chain" id="PRO_0000186694" description="Nitrogen regulatory protein">
    <location>
        <begin position="1"/>
        <end position="163"/>
    </location>
</feature>
<feature type="domain" description="PTS EIIA type-2" evidence="2">
    <location>
        <begin position="12"/>
        <end position="156"/>
    </location>
</feature>
<feature type="active site" description="Tele-phosphohistidine intermediate" evidence="2">
    <location>
        <position position="73"/>
    </location>
</feature>
<feature type="helix" evidence="3">
    <location>
        <begin position="10"/>
        <end position="12"/>
    </location>
</feature>
<feature type="helix" evidence="3">
    <location>
        <begin position="16"/>
        <end position="18"/>
    </location>
</feature>
<feature type="strand" evidence="3">
    <location>
        <begin position="19"/>
        <end position="23"/>
    </location>
</feature>
<feature type="helix" evidence="3">
    <location>
        <begin position="28"/>
        <end position="43"/>
    </location>
</feature>
<feature type="helix" evidence="3">
    <location>
        <begin position="47"/>
        <end position="58"/>
    </location>
</feature>
<feature type="strand" evidence="3">
    <location>
        <begin position="64"/>
        <end position="66"/>
    </location>
</feature>
<feature type="strand" evidence="3">
    <location>
        <begin position="73"/>
        <end position="76"/>
    </location>
</feature>
<feature type="helix" evidence="3">
    <location>
        <begin position="78"/>
        <end position="80"/>
    </location>
</feature>
<feature type="strand" evidence="3">
    <location>
        <begin position="84"/>
        <end position="94"/>
    </location>
</feature>
<feature type="strand" evidence="3">
    <location>
        <begin position="104"/>
        <end position="113"/>
    </location>
</feature>
<feature type="helix" evidence="3">
    <location>
        <begin position="114"/>
        <end position="116"/>
    </location>
</feature>
<feature type="turn" evidence="3">
    <location>
        <begin position="117"/>
        <end position="120"/>
    </location>
</feature>
<feature type="helix" evidence="3">
    <location>
        <begin position="121"/>
        <end position="131"/>
    </location>
</feature>
<feature type="helix" evidence="3">
    <location>
        <begin position="134"/>
        <end position="142"/>
    </location>
</feature>
<feature type="helix" evidence="3">
    <location>
        <begin position="146"/>
        <end position="154"/>
    </location>
</feature>
<protein>
    <recommendedName>
        <fullName>Nitrogen regulatory protein</fullName>
    </recommendedName>
    <alternativeName>
        <fullName>Enzyme IIA-NTR</fullName>
    </alternativeName>
    <alternativeName>
        <fullName>PTS system EIIA component</fullName>
    </alternativeName>
    <alternativeName>
        <fullName>Phosphotransferase enzyme IIA component</fullName>
    </alternativeName>
</protein>
<evidence type="ECO:0000250" key="1"/>
<evidence type="ECO:0000255" key="2">
    <source>
        <dbReference type="PROSITE-ProRule" id="PRU00417"/>
    </source>
</evidence>
<evidence type="ECO:0007829" key="3">
    <source>
        <dbReference type="PDB" id="1A6J"/>
    </source>
</evidence>
<comment type="function">
    <text evidence="1">Seems to have a role in regulating nitrogen assimilation.</text>
</comment>
<comment type="interaction">
    <interactant intactId="EBI-547017">
        <id>P69829</id>
    </interactant>
    <interactant intactId="EBI-1123100">
        <id>P21865</id>
        <label>kdpD</label>
    </interactant>
    <organismsDiffer>false</organismsDiffer>
    <experiments>4</experiments>
</comment>
<comment type="interaction">
    <interactant intactId="EBI-547017">
        <id>P69829</id>
    </interactant>
    <interactant intactId="EBI-1132371">
        <id>P0AGI8</id>
        <label>trkA</label>
    </interactant>
    <organismsDiffer>false</organismsDiffer>
    <experiments>3</experiments>
</comment>
<comment type="subcellular location">
    <subcellularLocation>
        <location>Cytoplasm</location>
    </subcellularLocation>
</comment>
<comment type="domain">
    <text>The EIIA domain is phosphorylated by phospho-NPr on a histidyl residue.</text>
</comment>
<proteinExistence type="evidence at protein level"/>
<keyword id="KW-0002">3D-structure</keyword>
<keyword id="KW-0963">Cytoplasm</keyword>
<keyword id="KW-0418">Kinase</keyword>
<keyword id="KW-1185">Reference proteome</keyword>
<keyword id="KW-0808">Transferase</keyword>
<dbReference type="EMBL" id="U12684">
    <property type="protein sequence ID" value="AAB60165.1"/>
    <property type="molecule type" value="Genomic_DNA"/>
</dbReference>
<dbReference type="EMBL" id="D12938">
    <property type="protein sequence ID" value="BAA02317.1"/>
    <property type="molecule type" value="Genomic_DNA"/>
</dbReference>
<dbReference type="EMBL" id="Z27094">
    <property type="protein sequence ID" value="CAA81619.1"/>
    <property type="molecule type" value="Genomic_DNA"/>
</dbReference>
<dbReference type="EMBL" id="U18997">
    <property type="protein sequence ID" value="AAA58006.1"/>
    <property type="molecule type" value="Genomic_DNA"/>
</dbReference>
<dbReference type="EMBL" id="U00096">
    <property type="protein sequence ID" value="AAC76236.1"/>
    <property type="molecule type" value="Genomic_DNA"/>
</dbReference>
<dbReference type="EMBL" id="AP009048">
    <property type="protein sequence ID" value="BAE77248.1"/>
    <property type="molecule type" value="Genomic_DNA"/>
</dbReference>
<dbReference type="PIR" id="I76720">
    <property type="entry name" value="I76720"/>
</dbReference>
<dbReference type="RefSeq" id="NP_417671.1">
    <property type="nucleotide sequence ID" value="NC_000913.3"/>
</dbReference>
<dbReference type="RefSeq" id="WP_000183676.1">
    <property type="nucleotide sequence ID" value="NZ_STEB01000012.1"/>
</dbReference>
<dbReference type="PDB" id="1A6J">
    <property type="method" value="X-ray"/>
    <property type="resolution" value="2.35 A"/>
    <property type="chains" value="A/B=1-163"/>
</dbReference>
<dbReference type="PDBsum" id="1A6J"/>
<dbReference type="BMRB" id="P69829"/>
<dbReference type="SMR" id="P69829"/>
<dbReference type="BioGRID" id="4259284">
    <property type="interactions" value="22"/>
</dbReference>
<dbReference type="BioGRID" id="852034">
    <property type="interactions" value="6"/>
</dbReference>
<dbReference type="DIP" id="DIP-10604N"/>
<dbReference type="FunCoup" id="P69829">
    <property type="interactions" value="255"/>
</dbReference>
<dbReference type="IntAct" id="P69829">
    <property type="interactions" value="10"/>
</dbReference>
<dbReference type="STRING" id="511145.b3204"/>
<dbReference type="jPOST" id="P69829"/>
<dbReference type="PaxDb" id="511145-b3204"/>
<dbReference type="EnsemblBacteria" id="AAC76236">
    <property type="protein sequence ID" value="AAC76236"/>
    <property type="gene ID" value="b3204"/>
</dbReference>
<dbReference type="GeneID" id="86862399"/>
<dbReference type="GeneID" id="947721"/>
<dbReference type="KEGG" id="ecj:JW3171"/>
<dbReference type="KEGG" id="eco:b3204"/>
<dbReference type="KEGG" id="ecoc:C3026_17435"/>
<dbReference type="PATRIC" id="fig|1411691.4.peg.3527"/>
<dbReference type="EchoBASE" id="EB1633"/>
<dbReference type="eggNOG" id="COG1762">
    <property type="taxonomic scope" value="Bacteria"/>
</dbReference>
<dbReference type="HOGENOM" id="CLU_072531_5_2_6"/>
<dbReference type="InParanoid" id="P69829"/>
<dbReference type="OMA" id="KSAVQCT"/>
<dbReference type="OrthoDB" id="95460at2"/>
<dbReference type="PhylomeDB" id="P69829"/>
<dbReference type="BioCyc" id="EcoCyc:EG11682-MONOMER"/>
<dbReference type="EvolutionaryTrace" id="P69829"/>
<dbReference type="PRO" id="PR:P69829"/>
<dbReference type="Proteomes" id="UP000000625">
    <property type="component" value="Chromosome"/>
</dbReference>
<dbReference type="GO" id="GO:0005829">
    <property type="term" value="C:cytosol"/>
    <property type="evidence" value="ECO:0000314"/>
    <property type="project" value="EcoCyc"/>
</dbReference>
<dbReference type="GO" id="GO:0004857">
    <property type="term" value="F:enzyme inhibitor activity"/>
    <property type="evidence" value="ECO:0000315"/>
    <property type="project" value="EcoCyc"/>
</dbReference>
<dbReference type="GO" id="GO:0016301">
    <property type="term" value="F:kinase activity"/>
    <property type="evidence" value="ECO:0007669"/>
    <property type="project" value="UniProtKB-KW"/>
</dbReference>
<dbReference type="GO" id="GO:0030295">
    <property type="term" value="F:protein kinase activator activity"/>
    <property type="evidence" value="ECO:0000314"/>
    <property type="project" value="EcoCyc"/>
</dbReference>
<dbReference type="GO" id="GO:0008982">
    <property type="term" value="F:protein-N(PI)-phosphohistidine-sugar phosphotransferase activity"/>
    <property type="evidence" value="ECO:0007669"/>
    <property type="project" value="InterPro"/>
</dbReference>
<dbReference type="GO" id="GO:0009401">
    <property type="term" value="P:phosphoenolpyruvate-dependent sugar phosphotransferase system"/>
    <property type="evidence" value="ECO:0007669"/>
    <property type="project" value="InterPro"/>
</dbReference>
<dbReference type="CDD" id="cd00211">
    <property type="entry name" value="PTS_IIA_fru"/>
    <property type="match status" value="1"/>
</dbReference>
<dbReference type="FunFam" id="3.40.930.10:FF:000003">
    <property type="entry name" value="PTS IIA-like nitrogen regulatory protein PtsN"/>
    <property type="match status" value="1"/>
</dbReference>
<dbReference type="Gene3D" id="3.40.930.10">
    <property type="entry name" value="Mannitol-specific EII, Chain A"/>
    <property type="match status" value="1"/>
</dbReference>
<dbReference type="InterPro" id="IPR016152">
    <property type="entry name" value="PTrfase/Anion_transptr"/>
</dbReference>
<dbReference type="InterPro" id="IPR002178">
    <property type="entry name" value="PTS_EIIA_type-2_dom"/>
</dbReference>
<dbReference type="InterPro" id="IPR006320">
    <property type="entry name" value="PTS_Nitro_regul"/>
</dbReference>
<dbReference type="InterPro" id="IPR051541">
    <property type="entry name" value="PTS_SugarTrans_NitroReg"/>
</dbReference>
<dbReference type="NCBIfam" id="TIGR01419">
    <property type="entry name" value="nitro_reg_IIA"/>
    <property type="match status" value="1"/>
</dbReference>
<dbReference type="NCBIfam" id="NF008145">
    <property type="entry name" value="PRK10896.1"/>
    <property type="match status" value="1"/>
</dbReference>
<dbReference type="PANTHER" id="PTHR47738:SF1">
    <property type="entry name" value="NITROGEN REGULATORY PROTEIN"/>
    <property type="match status" value="1"/>
</dbReference>
<dbReference type="PANTHER" id="PTHR47738">
    <property type="entry name" value="PTS SYSTEM FRUCTOSE-LIKE EIIA COMPONENT-RELATED"/>
    <property type="match status" value="1"/>
</dbReference>
<dbReference type="Pfam" id="PF00359">
    <property type="entry name" value="PTS_EIIA_2"/>
    <property type="match status" value="1"/>
</dbReference>
<dbReference type="SUPFAM" id="SSF55804">
    <property type="entry name" value="Phoshotransferase/anion transport protein"/>
    <property type="match status" value="1"/>
</dbReference>
<dbReference type="PROSITE" id="PS51094">
    <property type="entry name" value="PTS_EIIA_TYPE_2"/>
    <property type="match status" value="1"/>
</dbReference>
<dbReference type="PROSITE" id="PS00372">
    <property type="entry name" value="PTS_EIIA_TYPE_2_HIS"/>
    <property type="match status" value="1"/>
</dbReference>
<name>PTSN_ECOLI</name>
<gene>
    <name type="primary">ptsN</name>
    <name type="synonym">rpoP</name>
    <name type="synonym">yhbI</name>
    <name type="ordered locus">b3204</name>
    <name type="ordered locus">JW3171</name>
</gene>
<sequence>MTNNDTTLQLSSVLNRECTRSRVHCQSKKRALEIISELAAKQLSLPPQVVFEAILTREKMGSTGIGNGIAIPHGKLEEDTLRAVGVFVQLETPIAFDAIDNQPVDLLFALLVPADQTKTHLHTLSLVAKRLADKTICRRLRAAQSDEELYQIITDTEGTPDEA</sequence>
<reference key="1">
    <citation type="journal article" date="1995" name="J. Biol. Chem.">
        <title>Novel proteins of the phosphotransferase system encoded within the rpoN operon of Escherichia coli. Enzyme IIANtr affects growth on organic nitrogen and the conditional lethality of an erats mutant.</title>
        <authorList>
            <person name="Powell B.S."/>
            <person name="Court D.L."/>
            <person name="Inada T."/>
            <person name="Nakamura Y."/>
            <person name="Michotey V."/>
            <person name="Cui X."/>
            <person name="Reizer A."/>
            <person name="Saier M.H. Jr."/>
            <person name="Reizer J."/>
        </authorList>
    </citation>
    <scope>NUCLEOTIDE SEQUENCE [GENOMIC DNA]</scope>
    <scope>CHARACTERIZATION</scope>
    <source>
        <strain>K12 / W3110 / ATCC 27325 / DSM 5911</strain>
    </source>
</reference>
<reference key="2">
    <citation type="journal article" date="1993" name="J. Bacteriol.">
        <title>Physical map location of the rpoN gene of Escherichia coli.</title>
        <authorList>
            <person name="Imaishi H."/>
            <person name="Gomada M."/>
            <person name="Inouye S."/>
            <person name="Nakazawa A."/>
        </authorList>
    </citation>
    <scope>NUCLEOTIDE SEQUENCE [GENOMIC DNA]</scope>
    <source>
        <strain>K12</strain>
    </source>
</reference>
<reference key="3">
    <citation type="journal article" date="1994" name="Microbiology">
        <title>Molecular analysis of the operon which encodes the RNA polymerase sigma factor sigma 54 of Escherichia coli.</title>
        <authorList>
            <person name="Jones D.H.A."/>
            <person name="Franklin C.F.H."/>
            <person name="Thomas C.M."/>
        </authorList>
    </citation>
    <scope>NUCLEOTIDE SEQUENCE [GENOMIC DNA]</scope>
    <source>
        <strain>K12</strain>
    </source>
</reference>
<reference key="4">
    <citation type="journal article" date="1997" name="Science">
        <title>The complete genome sequence of Escherichia coli K-12.</title>
        <authorList>
            <person name="Blattner F.R."/>
            <person name="Plunkett G. III"/>
            <person name="Bloch C.A."/>
            <person name="Perna N.T."/>
            <person name="Burland V."/>
            <person name="Riley M."/>
            <person name="Collado-Vides J."/>
            <person name="Glasner J.D."/>
            <person name="Rode C.K."/>
            <person name="Mayhew G.F."/>
            <person name="Gregor J."/>
            <person name="Davis N.W."/>
            <person name="Kirkpatrick H.A."/>
            <person name="Goeden M.A."/>
            <person name="Rose D.J."/>
            <person name="Mau B."/>
            <person name="Shao Y."/>
        </authorList>
    </citation>
    <scope>NUCLEOTIDE SEQUENCE [LARGE SCALE GENOMIC DNA]</scope>
    <source>
        <strain>K12 / MG1655 / ATCC 47076</strain>
    </source>
</reference>
<reference key="5">
    <citation type="journal article" date="2006" name="Mol. Syst. Biol.">
        <title>Highly accurate genome sequences of Escherichia coli K-12 strains MG1655 and W3110.</title>
        <authorList>
            <person name="Hayashi K."/>
            <person name="Morooka N."/>
            <person name="Yamamoto Y."/>
            <person name="Fujita K."/>
            <person name="Isono K."/>
            <person name="Choi S."/>
            <person name="Ohtsubo E."/>
            <person name="Baba T."/>
            <person name="Wanner B.L."/>
            <person name="Mori H."/>
            <person name="Horiuchi T."/>
        </authorList>
    </citation>
    <scope>NUCLEOTIDE SEQUENCE [LARGE SCALE GENOMIC DNA]</scope>
    <source>
        <strain>K12 / W3110 / ATCC 27325 / DSM 5911</strain>
    </source>
</reference>
<reference key="6">
    <citation type="journal article" date="1998" name="J. Mol. Biol.">
        <title>The three-dimensional structure of the nitrogen regulatory protein IIANtr from Escherichia coli.</title>
        <authorList>
            <person name="Bordo D."/>
            <person name="van Monfort R.L."/>
            <person name="Pijning T."/>
            <person name="Kalk K.H."/>
            <person name="Reizer J."/>
            <person name="Saier M.H. Jr."/>
            <person name="Dijkstra B.W."/>
        </authorList>
    </citation>
    <scope>X-RAY CRYSTALLOGRAPHY (2.35 ANGSTROMS)</scope>
    <source>
        <strain>K12 / W3110 / ATCC 27325 / DSM 5911</strain>
    </source>
</reference>
<accession>P69829</accession>
<accession>P31222</accession>
<accession>Q2M908</accession>